<accession>A0ZZV4</accession>
<organism>
    <name type="scientific">Bifidobacterium adolescentis (strain ATCC 15703 / DSM 20083 / NCTC 11814 / E194a)</name>
    <dbReference type="NCBI Taxonomy" id="367928"/>
    <lineage>
        <taxon>Bacteria</taxon>
        <taxon>Bacillati</taxon>
        <taxon>Actinomycetota</taxon>
        <taxon>Actinomycetes</taxon>
        <taxon>Bifidobacteriales</taxon>
        <taxon>Bifidobacteriaceae</taxon>
        <taxon>Bifidobacterium</taxon>
    </lineage>
</organism>
<feature type="chain" id="PRO_1000006453" description="tRNA (guanine-N(1)-)-methyltransferase">
    <location>
        <begin position="1"/>
        <end position="306"/>
    </location>
</feature>
<feature type="binding site" evidence="1">
    <location>
        <position position="157"/>
    </location>
    <ligand>
        <name>S-adenosyl-L-methionine</name>
        <dbReference type="ChEBI" id="CHEBI:59789"/>
    </ligand>
</feature>
<feature type="binding site" evidence="1">
    <location>
        <begin position="182"/>
        <end position="187"/>
    </location>
    <ligand>
        <name>S-adenosyl-L-methionine</name>
        <dbReference type="ChEBI" id="CHEBI:59789"/>
    </ligand>
</feature>
<reference key="1">
    <citation type="submission" date="2006-12" db="EMBL/GenBank/DDBJ databases">
        <title>Bifidobacterium adolescentis complete genome sequence.</title>
        <authorList>
            <person name="Suzuki T."/>
            <person name="Tsuda Y."/>
            <person name="Kanou N."/>
            <person name="Inoue T."/>
            <person name="Kumazaki K."/>
            <person name="Nagano S."/>
            <person name="Hirai S."/>
            <person name="Tanaka K."/>
            <person name="Watanabe K."/>
        </authorList>
    </citation>
    <scope>NUCLEOTIDE SEQUENCE [LARGE SCALE GENOMIC DNA]</scope>
    <source>
        <strain>ATCC 15703 / DSM 20083 / NCTC 11814 / E194a</strain>
    </source>
</reference>
<keyword id="KW-0963">Cytoplasm</keyword>
<keyword id="KW-0489">Methyltransferase</keyword>
<keyword id="KW-1185">Reference proteome</keyword>
<keyword id="KW-0949">S-adenosyl-L-methionine</keyword>
<keyword id="KW-0808">Transferase</keyword>
<keyword id="KW-0819">tRNA processing</keyword>
<protein>
    <recommendedName>
        <fullName evidence="1">tRNA (guanine-N(1)-)-methyltransferase</fullName>
        <ecNumber evidence="1">2.1.1.228</ecNumber>
    </recommendedName>
    <alternativeName>
        <fullName evidence="1">M1G-methyltransferase</fullName>
    </alternativeName>
    <alternativeName>
        <fullName evidence="1">tRNA [GM37] methyltransferase</fullName>
    </alternativeName>
</protein>
<sequence>MKIDIVSVFPEYFEVLNLSLLGKAQEKGLVEVTAHNLRDWTHDVHHSVDDTPVGGGAGMVMKPEVWSECLDELLHLEPTTVTCDSMVTCDSTADADDTASADAAEPAESATEIAANADTVPATDRPVLIFPNPSAPLFTQQDATELSHANHLLFGCGRYEGYDARIPQYYRAQGVDVREYSIGDYVLNGGEVAVSVMLEAITRLLPGFMGNAASIVEESYTGENALLEHRQYTKPADWRGIKVPDVLLSGDHAKVDRFRRDEALAKTNELRPDLIEALDCSKLDKADRKTLMALGWEVSGAHPRQR</sequence>
<gene>
    <name evidence="1" type="primary">trmD</name>
    <name type="ordered locus">BAD_0206</name>
</gene>
<dbReference type="EC" id="2.1.1.228" evidence="1"/>
<dbReference type="EMBL" id="AP009256">
    <property type="protein sequence ID" value="BAF38987.1"/>
    <property type="molecule type" value="Genomic_DNA"/>
</dbReference>
<dbReference type="RefSeq" id="WP_011742733.1">
    <property type="nucleotide sequence ID" value="NC_008618.1"/>
</dbReference>
<dbReference type="SMR" id="A0ZZV4"/>
<dbReference type="STRING" id="367928.BAD_0206"/>
<dbReference type="PaxDb" id="1680-BADO_0214"/>
<dbReference type="GeneID" id="4557660"/>
<dbReference type="KEGG" id="bad:BAD_0206"/>
<dbReference type="HOGENOM" id="CLU_047363_0_0_11"/>
<dbReference type="Proteomes" id="UP000008702">
    <property type="component" value="Chromosome"/>
</dbReference>
<dbReference type="GO" id="GO:0005829">
    <property type="term" value="C:cytosol"/>
    <property type="evidence" value="ECO:0007669"/>
    <property type="project" value="TreeGrafter"/>
</dbReference>
<dbReference type="GO" id="GO:0052906">
    <property type="term" value="F:tRNA (guanine(37)-N1)-methyltransferase activity"/>
    <property type="evidence" value="ECO:0007669"/>
    <property type="project" value="UniProtKB-UniRule"/>
</dbReference>
<dbReference type="GO" id="GO:0002939">
    <property type="term" value="P:tRNA N1-guanine methylation"/>
    <property type="evidence" value="ECO:0007669"/>
    <property type="project" value="TreeGrafter"/>
</dbReference>
<dbReference type="CDD" id="cd18080">
    <property type="entry name" value="TrmD-like"/>
    <property type="match status" value="1"/>
</dbReference>
<dbReference type="Gene3D" id="3.40.1280.10">
    <property type="match status" value="2"/>
</dbReference>
<dbReference type="Gene3D" id="1.10.1270.20">
    <property type="entry name" value="tRNA(m1g37)methyltransferase, domain 2"/>
    <property type="match status" value="1"/>
</dbReference>
<dbReference type="HAMAP" id="MF_00605">
    <property type="entry name" value="TrmD"/>
    <property type="match status" value="1"/>
</dbReference>
<dbReference type="InterPro" id="IPR029028">
    <property type="entry name" value="Alpha/beta_knot_MTases"/>
</dbReference>
<dbReference type="InterPro" id="IPR023148">
    <property type="entry name" value="tRNA_m1G_MeTrfase_C_sf"/>
</dbReference>
<dbReference type="InterPro" id="IPR002649">
    <property type="entry name" value="tRNA_m1G_MeTrfase_TrmD"/>
</dbReference>
<dbReference type="InterPro" id="IPR029026">
    <property type="entry name" value="tRNA_m1G_MTases_N"/>
</dbReference>
<dbReference type="InterPro" id="IPR016009">
    <property type="entry name" value="tRNA_MeTrfase_TRMD/TRM10"/>
</dbReference>
<dbReference type="NCBIfam" id="NF000648">
    <property type="entry name" value="PRK00026.1"/>
    <property type="match status" value="1"/>
</dbReference>
<dbReference type="PANTHER" id="PTHR46417">
    <property type="entry name" value="TRNA (GUANINE-N(1)-)-METHYLTRANSFERASE"/>
    <property type="match status" value="1"/>
</dbReference>
<dbReference type="PANTHER" id="PTHR46417:SF1">
    <property type="entry name" value="TRNA (GUANINE-N(1)-)-METHYLTRANSFERASE"/>
    <property type="match status" value="1"/>
</dbReference>
<dbReference type="Pfam" id="PF01746">
    <property type="entry name" value="tRNA_m1G_MT"/>
    <property type="match status" value="2"/>
</dbReference>
<dbReference type="SUPFAM" id="SSF75217">
    <property type="entry name" value="alpha/beta knot"/>
    <property type="match status" value="1"/>
</dbReference>
<proteinExistence type="inferred from homology"/>
<comment type="function">
    <text evidence="1">Specifically methylates guanosine-37 in various tRNAs.</text>
</comment>
<comment type="catalytic activity">
    <reaction evidence="1">
        <text>guanosine(37) in tRNA + S-adenosyl-L-methionine = N(1)-methylguanosine(37) in tRNA + S-adenosyl-L-homocysteine + H(+)</text>
        <dbReference type="Rhea" id="RHEA:36899"/>
        <dbReference type="Rhea" id="RHEA-COMP:10145"/>
        <dbReference type="Rhea" id="RHEA-COMP:10147"/>
        <dbReference type="ChEBI" id="CHEBI:15378"/>
        <dbReference type="ChEBI" id="CHEBI:57856"/>
        <dbReference type="ChEBI" id="CHEBI:59789"/>
        <dbReference type="ChEBI" id="CHEBI:73542"/>
        <dbReference type="ChEBI" id="CHEBI:74269"/>
        <dbReference type="EC" id="2.1.1.228"/>
    </reaction>
</comment>
<comment type="subunit">
    <text evidence="1">Homodimer.</text>
</comment>
<comment type="subcellular location">
    <subcellularLocation>
        <location evidence="1">Cytoplasm</location>
    </subcellularLocation>
</comment>
<comment type="similarity">
    <text evidence="1">Belongs to the RNA methyltransferase TrmD family.</text>
</comment>
<evidence type="ECO:0000255" key="1">
    <source>
        <dbReference type="HAMAP-Rule" id="MF_00605"/>
    </source>
</evidence>
<name>TRMD_BIFAA</name>